<keyword id="KW-0238">DNA-binding</keyword>
<keyword id="KW-0479">Metal-binding</keyword>
<keyword id="KW-0539">Nucleus</keyword>
<keyword id="KW-0804">Transcription</keyword>
<keyword id="KW-0805">Transcription regulation</keyword>
<keyword id="KW-0862">Zinc</keyword>
<gene>
    <name type="primary">priB</name>
</gene>
<sequence>MEVHAEQLQKPPVVRGARACTTCRAAKMKCVGAEDGQRQCQRCKRANVQCIFEKHRRGRKPGSKLSEASKMLRRLEKGLNSAKSKAFSIDARHSSSYRDSHPSLGEPDDRYTNGVRSHPYSPPNGQFVSNLPPLNLPSYPDAASEYTASSTSSRTLDANDDEGDSASDRAEDNIFPANFIQRERRRNSFFRTILNPEDAPASGPSSVRCSETYSPPQSPAAPAGLNDPVSAGIVDEEHAKVLFDLIFLRLNPFINLFDPSLHTVSYVRNKSPFLFTVLIMAGCKFFRPELFKQCQKLADEYAVQAFACLTYWKGHDDNRTSTWTFVGYACRMRVEIGLNRYVPNVPSNETELQRLERRNRERTYLVLFIHDRSLSTQTGRHWMLPEDDFIRHSDRWHESSGGSVRPEDVIVAAFVQLRHIAAETTEIFQRGVDMSSEVVLRSCNSQLTQWNETWHREMQQAGGGAFHFSFLSLFRLYVRLFTNSLALRESSNRATPNIQALSACYTSAVDSLKVVSEFARMNVLRYGQETITMMSAYAALYLLSLLRNTLRYCSCTMAQLKMRIL</sequence>
<organism>
    <name type="scientific">Lentinula edodes</name>
    <name type="common">Shiitake mushroom</name>
    <name type="synonym">Lentinus edodes</name>
    <dbReference type="NCBI Taxonomy" id="5353"/>
    <lineage>
        <taxon>Eukaryota</taxon>
        <taxon>Fungi</taxon>
        <taxon>Dikarya</taxon>
        <taxon>Basidiomycota</taxon>
        <taxon>Agaricomycotina</taxon>
        <taxon>Agaricomycetes</taxon>
        <taxon>Agaricomycetidae</taxon>
        <taxon>Agaricales</taxon>
        <taxon>Marasmiineae</taxon>
        <taxon>Omphalotaceae</taxon>
        <taxon>Lentinula</taxon>
    </lineage>
</organism>
<name>PRIB_LENED</name>
<reference key="1">
    <citation type="journal article" date="1994" name="Gene">
        <title>A novel cDNA, priBc, encoding a protein with a Zn(II)2Cys6 zinc cluster DNA-binding motif, derived from the basidiomycete Lentinus edodes.</title>
        <authorList>
            <person name="Endo H."/>
            <person name="Kajiwara S."/>
            <person name="Tsunoka O."/>
            <person name="Shishido K."/>
        </authorList>
    </citation>
    <scope>NUCLEOTIDE SEQUENCE [MRNA]</scope>
    <source>
        <strain>FMC2</strain>
    </source>
</reference>
<proteinExistence type="evidence at transcript level"/>
<dbReference type="EMBL" id="D14489">
    <property type="protein sequence ID" value="BAA03381.1"/>
    <property type="molecule type" value="mRNA"/>
</dbReference>
<dbReference type="GO" id="GO:0005634">
    <property type="term" value="C:nucleus"/>
    <property type="evidence" value="ECO:0007669"/>
    <property type="project" value="UniProtKB-SubCell"/>
</dbReference>
<dbReference type="GO" id="GO:0000981">
    <property type="term" value="F:DNA-binding transcription factor activity, RNA polymerase II-specific"/>
    <property type="evidence" value="ECO:0007669"/>
    <property type="project" value="InterPro"/>
</dbReference>
<dbReference type="GO" id="GO:0000976">
    <property type="term" value="F:transcription cis-regulatory region binding"/>
    <property type="evidence" value="ECO:0007669"/>
    <property type="project" value="TreeGrafter"/>
</dbReference>
<dbReference type="GO" id="GO:0008270">
    <property type="term" value="F:zinc ion binding"/>
    <property type="evidence" value="ECO:0007669"/>
    <property type="project" value="InterPro"/>
</dbReference>
<dbReference type="GO" id="GO:0006351">
    <property type="term" value="P:DNA-templated transcription"/>
    <property type="evidence" value="ECO:0007669"/>
    <property type="project" value="InterPro"/>
</dbReference>
<dbReference type="CDD" id="cd12148">
    <property type="entry name" value="fungal_TF_MHR"/>
    <property type="match status" value="1"/>
</dbReference>
<dbReference type="CDD" id="cd00067">
    <property type="entry name" value="GAL4"/>
    <property type="match status" value="1"/>
</dbReference>
<dbReference type="Gene3D" id="4.10.240.10">
    <property type="entry name" value="Zn(2)-C6 fungal-type DNA-binding domain"/>
    <property type="match status" value="1"/>
</dbReference>
<dbReference type="InterPro" id="IPR051089">
    <property type="entry name" value="prtT"/>
</dbReference>
<dbReference type="InterPro" id="IPR007219">
    <property type="entry name" value="Transcription_factor_dom_fun"/>
</dbReference>
<dbReference type="InterPro" id="IPR036864">
    <property type="entry name" value="Zn2-C6_fun-type_DNA-bd_sf"/>
</dbReference>
<dbReference type="InterPro" id="IPR001138">
    <property type="entry name" value="Zn2Cys6_DnaBD"/>
</dbReference>
<dbReference type="PANTHER" id="PTHR31845">
    <property type="entry name" value="FINGER DOMAIN PROTEIN, PUTATIVE-RELATED"/>
    <property type="match status" value="1"/>
</dbReference>
<dbReference type="PANTHER" id="PTHR31845:SF19">
    <property type="entry name" value="TRANSCRIPTION FACTOR DOMAIN-CONTAINING PROTEIN"/>
    <property type="match status" value="1"/>
</dbReference>
<dbReference type="Pfam" id="PF04082">
    <property type="entry name" value="Fungal_trans"/>
    <property type="match status" value="1"/>
</dbReference>
<dbReference type="Pfam" id="PF00172">
    <property type="entry name" value="Zn_clus"/>
    <property type="match status" value="1"/>
</dbReference>
<dbReference type="SMART" id="SM00066">
    <property type="entry name" value="GAL4"/>
    <property type="match status" value="1"/>
</dbReference>
<dbReference type="SUPFAM" id="SSF57701">
    <property type="entry name" value="Zn2/Cys6 DNA-binding domain"/>
    <property type="match status" value="1"/>
</dbReference>
<dbReference type="PROSITE" id="PS00463">
    <property type="entry name" value="ZN2_CY6_FUNGAL_1"/>
    <property type="match status" value="1"/>
</dbReference>
<dbReference type="PROSITE" id="PS50048">
    <property type="entry name" value="ZN2_CY6_FUNGAL_2"/>
    <property type="match status" value="1"/>
</dbReference>
<protein>
    <recommendedName>
        <fullName>Protein priB</fullName>
    </recommendedName>
</protein>
<evidence type="ECO:0000255" key="1">
    <source>
        <dbReference type="PROSITE-ProRule" id="PRU00227"/>
    </source>
</evidence>
<evidence type="ECO:0000256" key="2">
    <source>
        <dbReference type="SAM" id="MobiDB-lite"/>
    </source>
</evidence>
<feature type="chain" id="PRO_0000114966" description="Protein priB">
    <location>
        <begin position="1"/>
        <end position="565"/>
    </location>
</feature>
<feature type="DNA-binding region" description="Zn(2)-C6 fungal-type" evidence="1">
    <location>
        <begin position="20"/>
        <end position="50"/>
    </location>
</feature>
<feature type="region of interest" description="Disordered" evidence="2">
    <location>
        <begin position="82"/>
        <end position="170"/>
    </location>
</feature>
<feature type="region of interest" description="Disordered" evidence="2">
    <location>
        <begin position="195"/>
        <end position="224"/>
    </location>
</feature>
<feature type="compositionally biased region" description="Basic and acidic residues" evidence="2">
    <location>
        <begin position="90"/>
        <end position="111"/>
    </location>
</feature>
<feature type="compositionally biased region" description="Low complexity" evidence="2">
    <location>
        <begin position="129"/>
        <end position="155"/>
    </location>
</feature>
<feature type="compositionally biased region" description="Polar residues" evidence="2">
    <location>
        <begin position="203"/>
        <end position="215"/>
    </location>
</feature>
<comment type="subcellular location">
    <subcellularLocation>
        <location evidence="1">Nucleus</location>
    </subcellularLocation>
</comment>
<accession>P49412</accession>